<organism>
    <name type="scientific">Mycoplasmoides gallisepticum (strain R(low / passage 15 / clone 2))</name>
    <name type="common">Mycoplasma gallisepticum</name>
    <dbReference type="NCBI Taxonomy" id="710127"/>
    <lineage>
        <taxon>Bacteria</taxon>
        <taxon>Bacillati</taxon>
        <taxon>Mycoplasmatota</taxon>
        <taxon>Mycoplasmoidales</taxon>
        <taxon>Mycoplasmoidaceae</taxon>
        <taxon>Mycoplasmoides</taxon>
    </lineage>
</organism>
<keyword id="KW-1003">Cell membrane</keyword>
<keyword id="KW-0342">GTP-binding</keyword>
<keyword id="KW-0378">Hydrolase</keyword>
<keyword id="KW-0472">Membrane</keyword>
<keyword id="KW-0547">Nucleotide-binding</keyword>
<keyword id="KW-0648">Protein biosynthesis</keyword>
<keyword id="KW-1185">Reference proteome</keyword>
<protein>
    <recommendedName>
        <fullName evidence="1">Elongation factor 4</fullName>
        <shortName evidence="1">EF-4</shortName>
        <ecNumber evidence="1">3.6.5.n1</ecNumber>
    </recommendedName>
    <alternativeName>
        <fullName evidence="1">Ribosomal back-translocase LepA</fullName>
    </alternativeName>
</protein>
<proteinExistence type="inferred from homology"/>
<dbReference type="EC" id="3.6.5.n1" evidence="1"/>
<dbReference type="EMBL" id="AE015450">
    <property type="protein sequence ID" value="AAP56903.2"/>
    <property type="molecule type" value="Genomic_DNA"/>
</dbReference>
<dbReference type="RefSeq" id="WP_011113810.1">
    <property type="nucleotide sequence ID" value="NC_004829.2"/>
</dbReference>
<dbReference type="SMR" id="Q7NAT2"/>
<dbReference type="GeneID" id="93510387"/>
<dbReference type="KEGG" id="mga:MGA_0312"/>
<dbReference type="PATRIC" id="fig|233150.7.peg.625"/>
<dbReference type="HOGENOM" id="CLU_009995_3_3_14"/>
<dbReference type="OrthoDB" id="9804431at2"/>
<dbReference type="Proteomes" id="UP000001418">
    <property type="component" value="Chromosome"/>
</dbReference>
<dbReference type="GO" id="GO:0005886">
    <property type="term" value="C:plasma membrane"/>
    <property type="evidence" value="ECO:0007669"/>
    <property type="project" value="UniProtKB-SubCell"/>
</dbReference>
<dbReference type="GO" id="GO:0005525">
    <property type="term" value="F:GTP binding"/>
    <property type="evidence" value="ECO:0007669"/>
    <property type="project" value="UniProtKB-UniRule"/>
</dbReference>
<dbReference type="GO" id="GO:0003924">
    <property type="term" value="F:GTPase activity"/>
    <property type="evidence" value="ECO:0007669"/>
    <property type="project" value="UniProtKB-UniRule"/>
</dbReference>
<dbReference type="GO" id="GO:0043022">
    <property type="term" value="F:ribosome binding"/>
    <property type="evidence" value="ECO:0007669"/>
    <property type="project" value="UniProtKB-UniRule"/>
</dbReference>
<dbReference type="GO" id="GO:0003746">
    <property type="term" value="F:translation elongation factor activity"/>
    <property type="evidence" value="ECO:0007669"/>
    <property type="project" value="UniProtKB-UniRule"/>
</dbReference>
<dbReference type="GO" id="GO:0045727">
    <property type="term" value="P:positive regulation of translation"/>
    <property type="evidence" value="ECO:0007669"/>
    <property type="project" value="UniProtKB-UniRule"/>
</dbReference>
<dbReference type="CDD" id="cd03699">
    <property type="entry name" value="EF4_II"/>
    <property type="match status" value="1"/>
</dbReference>
<dbReference type="CDD" id="cd16260">
    <property type="entry name" value="EF4_III"/>
    <property type="match status" value="1"/>
</dbReference>
<dbReference type="CDD" id="cd01890">
    <property type="entry name" value="LepA"/>
    <property type="match status" value="1"/>
</dbReference>
<dbReference type="CDD" id="cd03709">
    <property type="entry name" value="lepA_C"/>
    <property type="match status" value="1"/>
</dbReference>
<dbReference type="FunFam" id="3.40.50.300:FF:000078">
    <property type="entry name" value="Elongation factor 4"/>
    <property type="match status" value="1"/>
</dbReference>
<dbReference type="FunFam" id="2.40.30.10:FF:000015">
    <property type="entry name" value="Translation factor GUF1, mitochondrial"/>
    <property type="match status" value="1"/>
</dbReference>
<dbReference type="FunFam" id="3.30.70.240:FF:000007">
    <property type="entry name" value="Translation factor GUF1, mitochondrial"/>
    <property type="match status" value="1"/>
</dbReference>
<dbReference type="FunFam" id="3.30.70.2570:FF:000001">
    <property type="entry name" value="Translation factor GUF1, mitochondrial"/>
    <property type="match status" value="1"/>
</dbReference>
<dbReference type="FunFam" id="3.30.70.870:FF:000004">
    <property type="entry name" value="Translation factor GUF1, mitochondrial"/>
    <property type="match status" value="1"/>
</dbReference>
<dbReference type="Gene3D" id="3.30.70.240">
    <property type="match status" value="1"/>
</dbReference>
<dbReference type="Gene3D" id="3.30.70.2570">
    <property type="entry name" value="Elongation factor 4, C-terminal domain"/>
    <property type="match status" value="1"/>
</dbReference>
<dbReference type="Gene3D" id="3.30.70.870">
    <property type="entry name" value="Elongation Factor G (Translational Gtpase), domain 3"/>
    <property type="match status" value="1"/>
</dbReference>
<dbReference type="Gene3D" id="3.40.50.300">
    <property type="entry name" value="P-loop containing nucleotide triphosphate hydrolases"/>
    <property type="match status" value="1"/>
</dbReference>
<dbReference type="Gene3D" id="2.40.30.10">
    <property type="entry name" value="Translation factors"/>
    <property type="match status" value="1"/>
</dbReference>
<dbReference type="HAMAP" id="MF_00071">
    <property type="entry name" value="LepA"/>
    <property type="match status" value="1"/>
</dbReference>
<dbReference type="InterPro" id="IPR006297">
    <property type="entry name" value="EF-4"/>
</dbReference>
<dbReference type="InterPro" id="IPR035647">
    <property type="entry name" value="EFG_III/V"/>
</dbReference>
<dbReference type="InterPro" id="IPR000640">
    <property type="entry name" value="EFG_V-like"/>
</dbReference>
<dbReference type="InterPro" id="IPR004161">
    <property type="entry name" value="EFTu-like_2"/>
</dbReference>
<dbReference type="InterPro" id="IPR031157">
    <property type="entry name" value="G_TR_CS"/>
</dbReference>
<dbReference type="InterPro" id="IPR038363">
    <property type="entry name" value="LepA_C_sf"/>
</dbReference>
<dbReference type="InterPro" id="IPR013842">
    <property type="entry name" value="LepA_CTD"/>
</dbReference>
<dbReference type="InterPro" id="IPR035654">
    <property type="entry name" value="LepA_IV"/>
</dbReference>
<dbReference type="InterPro" id="IPR027417">
    <property type="entry name" value="P-loop_NTPase"/>
</dbReference>
<dbReference type="InterPro" id="IPR005225">
    <property type="entry name" value="Small_GTP-bd"/>
</dbReference>
<dbReference type="InterPro" id="IPR000795">
    <property type="entry name" value="T_Tr_GTP-bd_dom"/>
</dbReference>
<dbReference type="InterPro" id="IPR009000">
    <property type="entry name" value="Transl_B-barrel_sf"/>
</dbReference>
<dbReference type="NCBIfam" id="TIGR01393">
    <property type="entry name" value="lepA"/>
    <property type="match status" value="1"/>
</dbReference>
<dbReference type="NCBIfam" id="TIGR00231">
    <property type="entry name" value="small_GTP"/>
    <property type="match status" value="1"/>
</dbReference>
<dbReference type="PANTHER" id="PTHR43512:SF4">
    <property type="entry name" value="TRANSLATION FACTOR GUF1 HOMOLOG, CHLOROPLASTIC"/>
    <property type="match status" value="1"/>
</dbReference>
<dbReference type="PANTHER" id="PTHR43512">
    <property type="entry name" value="TRANSLATION FACTOR GUF1-RELATED"/>
    <property type="match status" value="1"/>
</dbReference>
<dbReference type="Pfam" id="PF00679">
    <property type="entry name" value="EFG_C"/>
    <property type="match status" value="1"/>
</dbReference>
<dbReference type="Pfam" id="PF00009">
    <property type="entry name" value="GTP_EFTU"/>
    <property type="match status" value="1"/>
</dbReference>
<dbReference type="Pfam" id="PF03144">
    <property type="entry name" value="GTP_EFTU_D2"/>
    <property type="match status" value="1"/>
</dbReference>
<dbReference type="Pfam" id="PF06421">
    <property type="entry name" value="LepA_C"/>
    <property type="match status" value="1"/>
</dbReference>
<dbReference type="PRINTS" id="PR00315">
    <property type="entry name" value="ELONGATNFCT"/>
</dbReference>
<dbReference type="SMART" id="SM00838">
    <property type="entry name" value="EFG_C"/>
    <property type="match status" value="1"/>
</dbReference>
<dbReference type="SUPFAM" id="SSF54980">
    <property type="entry name" value="EF-G C-terminal domain-like"/>
    <property type="match status" value="2"/>
</dbReference>
<dbReference type="SUPFAM" id="SSF52540">
    <property type="entry name" value="P-loop containing nucleoside triphosphate hydrolases"/>
    <property type="match status" value="1"/>
</dbReference>
<dbReference type="SUPFAM" id="SSF50447">
    <property type="entry name" value="Translation proteins"/>
    <property type="match status" value="1"/>
</dbReference>
<dbReference type="PROSITE" id="PS00301">
    <property type="entry name" value="G_TR_1"/>
    <property type="match status" value="1"/>
</dbReference>
<dbReference type="PROSITE" id="PS51722">
    <property type="entry name" value="G_TR_2"/>
    <property type="match status" value="1"/>
</dbReference>
<accession>Q7NAT2</accession>
<reference key="1">
    <citation type="journal article" date="2003" name="Microbiology">
        <title>The complete genome sequence of the avian pathogen Mycoplasma gallisepticum strain R(low).</title>
        <authorList>
            <person name="Papazisi L."/>
            <person name="Gorton T.S."/>
            <person name="Kutish G."/>
            <person name="Markham P.F."/>
            <person name="Browning G.F."/>
            <person name="Nguyen D.K."/>
            <person name="Swartzell S."/>
            <person name="Madan A."/>
            <person name="Mahairas G."/>
            <person name="Geary S.J."/>
        </authorList>
    </citation>
    <scope>NUCLEOTIDE SEQUENCE [LARGE SCALE GENOMIC DNA]</scope>
    <source>
        <strain>R(low / passage 15 / clone 2)</strain>
    </source>
</reference>
<name>LEPA_MYCGA</name>
<feature type="chain" id="PRO_0000176297" description="Elongation factor 4">
    <location>
        <begin position="1"/>
        <end position="599"/>
    </location>
</feature>
<feature type="domain" description="tr-type G">
    <location>
        <begin position="4"/>
        <end position="185"/>
    </location>
</feature>
<feature type="binding site" evidence="1">
    <location>
        <begin position="16"/>
        <end position="21"/>
    </location>
    <ligand>
        <name>GTP</name>
        <dbReference type="ChEBI" id="CHEBI:37565"/>
    </ligand>
</feature>
<feature type="binding site" evidence="1">
    <location>
        <begin position="132"/>
        <end position="135"/>
    </location>
    <ligand>
        <name>GTP</name>
        <dbReference type="ChEBI" id="CHEBI:37565"/>
    </ligand>
</feature>
<gene>
    <name evidence="1" type="primary">lepA</name>
    <name type="ordered locus">MYCGA5530</name>
    <name type="ORF">MGA_0312</name>
</gene>
<sequence length="599" mass="67638">MDKKNIRNFSIIAHIDHGKSTLSDRLIEITETVSKREMKNQLLDSMELERERGITIKLNAVQLKFKRNNQDYTFHLIDTPGHVDFTYEVSRSLAACEAALLVVDATQGVQAQTLSNVYLALENNLEIIPVINKVDLPSADVERVKREIETKIGIDCSDVPLISAKTGLNIDQVLDVIIKKVPSPKNANDNDPLKALIFDSYYDPHKGVVCFIRIFDGKLKVGDEILFMANNVKYIVTEVGIKNPNMQSRAYLEAGEVGYVTASIKTIRDVHVGDTITNANNPCDKPLVGYRKVSSMVYAGLYPVDTADYQNLKVAMEKIVLTDAALEYEYETSNALGFGVRCGFLGLLHMDVIRERIVREYNIPLILLAPSVMYKCYLTDGQELKVDNPANMPERNRIKSMLEPYVKLSISTPDEFIGPIMELCQNFRGEYMELSEIDSSRKVLVYEIPLAEIIYSFFDKLKSVTKGYASLDYELIGYRDSNLVKVDILLNGQKVDALSFISHTQFVYQKAKKIVEKLKTLIPRHLFEIPIQAAVGSKIISRETIKAMRKNVLAKCYGGDVSRKKKLLEQQKEGKKRLKAIGSVQIPQETFSKLLQDDE</sequence>
<evidence type="ECO:0000255" key="1">
    <source>
        <dbReference type="HAMAP-Rule" id="MF_00071"/>
    </source>
</evidence>
<comment type="function">
    <text evidence="1">Required for accurate and efficient protein synthesis under certain stress conditions. May act as a fidelity factor of the translation reaction, by catalyzing a one-codon backward translocation of tRNAs on improperly translocated ribosomes. Back-translocation proceeds from a post-translocation (POST) complex to a pre-translocation (PRE) complex, thus giving elongation factor G a second chance to translocate the tRNAs correctly. Binds to ribosomes in a GTP-dependent manner.</text>
</comment>
<comment type="catalytic activity">
    <reaction evidence="1">
        <text>GTP + H2O = GDP + phosphate + H(+)</text>
        <dbReference type="Rhea" id="RHEA:19669"/>
        <dbReference type="ChEBI" id="CHEBI:15377"/>
        <dbReference type="ChEBI" id="CHEBI:15378"/>
        <dbReference type="ChEBI" id="CHEBI:37565"/>
        <dbReference type="ChEBI" id="CHEBI:43474"/>
        <dbReference type="ChEBI" id="CHEBI:58189"/>
        <dbReference type="EC" id="3.6.5.n1"/>
    </reaction>
</comment>
<comment type="subcellular location">
    <subcellularLocation>
        <location evidence="1">Cell membrane</location>
        <topology evidence="1">Peripheral membrane protein</topology>
        <orientation evidence="1">Cytoplasmic side</orientation>
    </subcellularLocation>
</comment>
<comment type="similarity">
    <text evidence="1">Belongs to the TRAFAC class translation factor GTPase superfamily. Classic translation factor GTPase family. LepA subfamily.</text>
</comment>